<name>ESFL1_ARATH</name>
<proteinExistence type="evidence at transcript level"/>
<evidence type="ECO:0000250" key="1"/>
<evidence type="ECO:0000255" key="2"/>
<evidence type="ECO:0000269" key="3">
    <source>
    </source>
</evidence>
<evidence type="ECO:0000305" key="4"/>
<sequence>MKSSHIALLCIVVLSLFALHECCEQGGQRHSQKVNEACVPGPCHPLVPHCWCCEHLRGIRPQCCWSGSTGRDYCNQQCNL</sequence>
<dbReference type="EMBL" id="AC007354">
    <property type="status" value="NOT_ANNOTATED_CDS"/>
    <property type="molecule type" value="Genomic_DNA"/>
</dbReference>
<dbReference type="EMBL" id="AC009398">
    <property type="protein sequence ID" value="AAF17659.1"/>
    <property type="status" value="ALT_SEQ"/>
    <property type="molecule type" value="Genomic_DNA"/>
</dbReference>
<dbReference type="EMBL" id="CP002684">
    <property type="status" value="NOT_ANNOTATED_CDS"/>
    <property type="molecule type" value="Genomic_DNA"/>
</dbReference>
<dbReference type="EMBL" id="EF408748">
    <property type="status" value="NOT_ANNOTATED_CDS"/>
    <property type="molecule type" value="mRNA"/>
</dbReference>
<dbReference type="Araport" id="AT1G10705"/>
<dbReference type="TAIR" id="AT1G10705"/>
<dbReference type="InParanoid" id="Q9SGX9"/>
<dbReference type="PRO" id="PR:Q9SGX9"/>
<dbReference type="Proteomes" id="UP000006548">
    <property type="component" value="Chromosome 1"/>
</dbReference>
<comment type="tissue specificity">
    <text evidence="3">Expressed in leaves.</text>
</comment>
<comment type="similarity">
    <text evidence="4">Belongs to the MEG family.</text>
</comment>
<comment type="sequence caution" evidence="4">
    <conflict type="erroneous gene model prediction">
        <sequence resource="EMBL-CDS" id="AAF17659"/>
    </conflict>
</comment>
<comment type="sequence caution" evidence="4">
    <conflict type="frameshift">
        <sequence resource="EMBL" id="EF408748"/>
    </conflict>
</comment>
<reference key="1">
    <citation type="journal article" date="2000" name="Nature">
        <title>Sequence and analysis of chromosome 1 of the plant Arabidopsis thaliana.</title>
        <authorList>
            <person name="Theologis A."/>
            <person name="Ecker J.R."/>
            <person name="Palm C.J."/>
            <person name="Federspiel N.A."/>
            <person name="Kaul S."/>
            <person name="White O."/>
            <person name="Alonso J."/>
            <person name="Altafi H."/>
            <person name="Araujo R."/>
            <person name="Bowman C.L."/>
            <person name="Brooks S.Y."/>
            <person name="Buehler E."/>
            <person name="Chan A."/>
            <person name="Chao Q."/>
            <person name="Chen H."/>
            <person name="Cheuk R.F."/>
            <person name="Chin C.W."/>
            <person name="Chung M.K."/>
            <person name="Conn L."/>
            <person name="Conway A.B."/>
            <person name="Conway A.R."/>
            <person name="Creasy T.H."/>
            <person name="Dewar K."/>
            <person name="Dunn P."/>
            <person name="Etgu P."/>
            <person name="Feldblyum T.V."/>
            <person name="Feng J.-D."/>
            <person name="Fong B."/>
            <person name="Fujii C.Y."/>
            <person name="Gill J.E."/>
            <person name="Goldsmith A.D."/>
            <person name="Haas B."/>
            <person name="Hansen N.F."/>
            <person name="Hughes B."/>
            <person name="Huizar L."/>
            <person name="Hunter J.L."/>
            <person name="Jenkins J."/>
            <person name="Johnson-Hopson C."/>
            <person name="Khan S."/>
            <person name="Khaykin E."/>
            <person name="Kim C.J."/>
            <person name="Koo H.L."/>
            <person name="Kremenetskaia I."/>
            <person name="Kurtz D.B."/>
            <person name="Kwan A."/>
            <person name="Lam B."/>
            <person name="Langin-Hooper S."/>
            <person name="Lee A."/>
            <person name="Lee J.M."/>
            <person name="Lenz C.A."/>
            <person name="Li J.H."/>
            <person name="Li Y.-P."/>
            <person name="Lin X."/>
            <person name="Liu S.X."/>
            <person name="Liu Z.A."/>
            <person name="Luros J.S."/>
            <person name="Maiti R."/>
            <person name="Marziali A."/>
            <person name="Militscher J."/>
            <person name="Miranda M."/>
            <person name="Nguyen M."/>
            <person name="Nierman W.C."/>
            <person name="Osborne B.I."/>
            <person name="Pai G."/>
            <person name="Peterson J."/>
            <person name="Pham P.K."/>
            <person name="Rizzo M."/>
            <person name="Rooney T."/>
            <person name="Rowley D."/>
            <person name="Sakano H."/>
            <person name="Salzberg S.L."/>
            <person name="Schwartz J.R."/>
            <person name="Shinn P."/>
            <person name="Southwick A.M."/>
            <person name="Sun H."/>
            <person name="Tallon L.J."/>
            <person name="Tambunga G."/>
            <person name="Toriumi M.J."/>
            <person name="Town C.D."/>
            <person name="Utterback T."/>
            <person name="Van Aken S."/>
            <person name="Vaysberg M."/>
            <person name="Vysotskaia V.S."/>
            <person name="Walker M."/>
            <person name="Wu D."/>
            <person name="Yu G."/>
            <person name="Fraser C.M."/>
            <person name="Venter J.C."/>
            <person name="Davis R.W."/>
        </authorList>
    </citation>
    <scope>NUCLEOTIDE SEQUENCE [LARGE SCALE GENOMIC DNA]</scope>
    <source>
        <strain>cv. Columbia</strain>
    </source>
</reference>
<reference key="2">
    <citation type="journal article" date="2017" name="Plant J.">
        <title>Araport11: a complete reannotation of the Arabidopsis thaliana reference genome.</title>
        <authorList>
            <person name="Cheng C.Y."/>
            <person name="Krishnakumar V."/>
            <person name="Chan A.P."/>
            <person name="Thibaud-Nissen F."/>
            <person name="Schobel S."/>
            <person name="Town C.D."/>
        </authorList>
    </citation>
    <scope>GENOME REANNOTATION</scope>
    <source>
        <strain>cv. Columbia</strain>
    </source>
</reference>
<reference key="3">
    <citation type="journal article" date="2007" name="BMC Genomics">
        <title>Experimental validation of novel genes predicted in the un-annotated regions of the Arabidopsis genome.</title>
        <authorList>
            <person name="Moskal W.A. Jr."/>
            <person name="Wu H.C."/>
            <person name="Underwood B.A."/>
            <person name="Wang W."/>
            <person name="Town C.D."/>
            <person name="Xiao Y.-L."/>
        </authorList>
    </citation>
    <scope>NUCLEOTIDE SEQUENCE [LARGE SCALE MRNA] OF 13-80</scope>
    <source>
        <strain>cv. Columbia</strain>
    </source>
</reference>
<reference key="4">
    <citation type="journal article" date="2014" name="Science">
        <title>Central cell-derived peptides regulate early embryo patterning in flowering plants.</title>
        <authorList>
            <person name="Costa L.M."/>
            <person name="Marshall E."/>
            <person name="Tesfaye M."/>
            <person name="Silverstein K.A."/>
            <person name="Mori M."/>
            <person name="Umetsu Y."/>
            <person name="Otterbach S.L."/>
            <person name="Papareddy R."/>
            <person name="Dickinson H.G."/>
            <person name="Boutiller K."/>
            <person name="VandenBosch K.A."/>
            <person name="Ohki S."/>
            <person name="Gutierrez-Marcos J.F."/>
        </authorList>
    </citation>
    <scope>IDENTIFICATION</scope>
    <scope>TISSUE SPECIFICITY</scope>
</reference>
<organism>
    <name type="scientific">Arabidopsis thaliana</name>
    <name type="common">Mouse-ear cress</name>
    <dbReference type="NCBI Taxonomy" id="3702"/>
    <lineage>
        <taxon>Eukaryota</taxon>
        <taxon>Viridiplantae</taxon>
        <taxon>Streptophyta</taxon>
        <taxon>Embryophyta</taxon>
        <taxon>Tracheophyta</taxon>
        <taxon>Spermatophyta</taxon>
        <taxon>Magnoliopsida</taxon>
        <taxon>eudicotyledons</taxon>
        <taxon>Gunneridae</taxon>
        <taxon>Pentapetalae</taxon>
        <taxon>rosids</taxon>
        <taxon>malvids</taxon>
        <taxon>Brassicales</taxon>
        <taxon>Brassicaceae</taxon>
        <taxon>Camelineae</taxon>
        <taxon>Arabidopsis</taxon>
    </lineage>
</organism>
<protein>
    <recommendedName>
        <fullName>EMBRYO SURROUNDING FACTOR 1-like protein 1</fullName>
    </recommendedName>
</protein>
<accession>Q9SGX9</accession>
<keyword id="KW-1015">Disulfide bond</keyword>
<keyword id="KW-1185">Reference proteome</keyword>
<keyword id="KW-0732">Signal</keyword>
<feature type="signal peptide" evidence="2">
    <location>
        <begin position="1"/>
        <end position="22"/>
    </location>
</feature>
<feature type="chain" id="PRO_0000430062" description="EMBRYO SURROUNDING FACTOR 1-like protein 1">
    <location>
        <begin position="23"/>
        <end position="80"/>
    </location>
</feature>
<feature type="disulfide bond" evidence="1">
    <location>
        <begin position="38"/>
        <end position="52"/>
    </location>
</feature>
<feature type="disulfide bond" evidence="1">
    <location>
        <begin position="43"/>
        <end position="78"/>
    </location>
</feature>
<feature type="disulfide bond" evidence="1">
    <location>
        <begin position="50"/>
        <end position="74"/>
    </location>
</feature>
<feature type="disulfide bond" evidence="1">
    <location>
        <begin position="53"/>
        <end position="64"/>
    </location>
</feature>
<gene>
    <name type="primary">ESFL1</name>
    <name type="ordered locus">At1g10705</name>
    <name type="ORF">F20B24.14</name>
    <name type="ORF">T16B5</name>
</gene>